<sequence length="114" mass="11770">MTVLLVALGGALGATTRYLTGRYVDSYRSFPVATFLVNVAGCLILGLLSGASLSEQTFALLGTGFCGGLTTYSTFAVESVGLLRIRRALPSVVYVVASVAAGLAAAWLGFRLTS</sequence>
<protein>
    <recommendedName>
        <fullName evidence="1">Fluoride-specific ion channel FluC 2</fullName>
    </recommendedName>
</protein>
<comment type="function">
    <text evidence="1">Fluoride-specific ion channel. Important for reducing fluoride concentration in the cell, thus reducing its toxicity.</text>
</comment>
<comment type="catalytic activity">
    <reaction evidence="1">
        <text>fluoride(in) = fluoride(out)</text>
        <dbReference type="Rhea" id="RHEA:76159"/>
        <dbReference type="ChEBI" id="CHEBI:17051"/>
    </reaction>
    <physiologicalReaction direction="left-to-right" evidence="1">
        <dbReference type="Rhea" id="RHEA:76160"/>
    </physiologicalReaction>
</comment>
<comment type="activity regulation">
    <text evidence="1">Na(+) is not transported, but it plays an essential structural role and its presence is essential for fluoride channel function.</text>
</comment>
<comment type="subcellular location">
    <subcellularLocation>
        <location evidence="1">Cell membrane</location>
        <topology evidence="1">Multi-pass membrane protein</topology>
    </subcellularLocation>
</comment>
<comment type="similarity">
    <text evidence="1">Belongs to the fluoride channel Fluc/FEX (TC 1.A.43) family.</text>
</comment>
<keyword id="KW-1003">Cell membrane</keyword>
<keyword id="KW-0407">Ion channel</keyword>
<keyword id="KW-0406">Ion transport</keyword>
<keyword id="KW-0472">Membrane</keyword>
<keyword id="KW-0479">Metal-binding</keyword>
<keyword id="KW-0915">Sodium</keyword>
<keyword id="KW-0812">Transmembrane</keyword>
<keyword id="KW-1133">Transmembrane helix</keyword>
<keyword id="KW-0813">Transport</keyword>
<gene>
    <name evidence="1" type="primary">fluC2</name>
    <name evidence="1" type="synonym">crcB2</name>
    <name type="ordered locus">RHA1_ro06412</name>
</gene>
<reference key="1">
    <citation type="journal article" date="2006" name="Proc. Natl. Acad. Sci. U.S.A.">
        <title>The complete genome of Rhodococcus sp. RHA1 provides insights into a catabolic powerhouse.</title>
        <authorList>
            <person name="McLeod M.P."/>
            <person name="Warren R.L."/>
            <person name="Hsiao W.W.L."/>
            <person name="Araki N."/>
            <person name="Myhre M."/>
            <person name="Fernandes C."/>
            <person name="Miyazawa D."/>
            <person name="Wong W."/>
            <person name="Lillquist A.L."/>
            <person name="Wang D."/>
            <person name="Dosanjh M."/>
            <person name="Hara H."/>
            <person name="Petrescu A."/>
            <person name="Morin R.D."/>
            <person name="Yang G."/>
            <person name="Stott J.M."/>
            <person name="Schein J.E."/>
            <person name="Shin H."/>
            <person name="Smailus D."/>
            <person name="Siddiqui A.S."/>
            <person name="Marra M.A."/>
            <person name="Jones S.J.M."/>
            <person name="Holt R."/>
            <person name="Brinkman F.S.L."/>
            <person name="Miyauchi K."/>
            <person name="Fukuda M."/>
            <person name="Davies J.E."/>
            <person name="Mohn W.W."/>
            <person name="Eltis L.D."/>
        </authorList>
    </citation>
    <scope>NUCLEOTIDE SEQUENCE [LARGE SCALE GENOMIC DNA]</scope>
    <source>
        <strain>RHA1</strain>
    </source>
</reference>
<feature type="chain" id="PRO_0000252926" description="Fluoride-specific ion channel FluC 2">
    <location>
        <begin position="1"/>
        <end position="114"/>
    </location>
</feature>
<feature type="transmembrane region" description="Helical" evidence="1">
    <location>
        <begin position="30"/>
        <end position="50"/>
    </location>
</feature>
<feature type="transmembrane region" description="Helical" evidence="1">
    <location>
        <begin position="57"/>
        <end position="77"/>
    </location>
</feature>
<feature type="transmembrane region" description="Helical" evidence="1">
    <location>
        <begin position="88"/>
        <end position="108"/>
    </location>
</feature>
<feature type="binding site" evidence="1">
    <location>
        <position position="67"/>
    </location>
    <ligand>
        <name>Na(+)</name>
        <dbReference type="ChEBI" id="CHEBI:29101"/>
        <note>structural</note>
    </ligand>
</feature>
<feature type="binding site" evidence="1">
    <location>
        <position position="70"/>
    </location>
    <ligand>
        <name>Na(+)</name>
        <dbReference type="ChEBI" id="CHEBI:29101"/>
        <note>structural</note>
    </ligand>
</feature>
<evidence type="ECO:0000255" key="1">
    <source>
        <dbReference type="HAMAP-Rule" id="MF_00454"/>
    </source>
</evidence>
<accession>Q0S2P8</accession>
<name>FLUC2_RHOJR</name>
<proteinExistence type="inferred from homology"/>
<dbReference type="EMBL" id="CP000431">
    <property type="protein sequence ID" value="ABG98188.1"/>
    <property type="molecule type" value="Genomic_DNA"/>
</dbReference>
<dbReference type="RefSeq" id="WP_011598317.1">
    <property type="nucleotide sequence ID" value="NC_008268.1"/>
</dbReference>
<dbReference type="SMR" id="Q0S2P8"/>
<dbReference type="KEGG" id="rha:RHA1_ro06412"/>
<dbReference type="PATRIC" id="fig|101510.16.peg.6465"/>
<dbReference type="eggNOG" id="COG0239">
    <property type="taxonomic scope" value="Bacteria"/>
</dbReference>
<dbReference type="HOGENOM" id="CLU_114342_2_3_11"/>
<dbReference type="Proteomes" id="UP000008710">
    <property type="component" value="Chromosome"/>
</dbReference>
<dbReference type="GO" id="GO:0005886">
    <property type="term" value="C:plasma membrane"/>
    <property type="evidence" value="ECO:0007669"/>
    <property type="project" value="UniProtKB-SubCell"/>
</dbReference>
<dbReference type="GO" id="GO:0062054">
    <property type="term" value="F:fluoride channel activity"/>
    <property type="evidence" value="ECO:0007669"/>
    <property type="project" value="UniProtKB-UniRule"/>
</dbReference>
<dbReference type="GO" id="GO:0046872">
    <property type="term" value="F:metal ion binding"/>
    <property type="evidence" value="ECO:0007669"/>
    <property type="project" value="UniProtKB-KW"/>
</dbReference>
<dbReference type="GO" id="GO:0140114">
    <property type="term" value="P:cellular detoxification of fluoride"/>
    <property type="evidence" value="ECO:0007669"/>
    <property type="project" value="UniProtKB-UniRule"/>
</dbReference>
<dbReference type="HAMAP" id="MF_00454">
    <property type="entry name" value="FluC"/>
    <property type="match status" value="1"/>
</dbReference>
<dbReference type="InterPro" id="IPR003691">
    <property type="entry name" value="FluC"/>
</dbReference>
<dbReference type="NCBIfam" id="TIGR00494">
    <property type="entry name" value="crcB"/>
    <property type="match status" value="1"/>
</dbReference>
<dbReference type="NCBIfam" id="NF010807">
    <property type="entry name" value="PRK14211.1"/>
    <property type="match status" value="1"/>
</dbReference>
<dbReference type="PANTHER" id="PTHR28259">
    <property type="entry name" value="FLUORIDE EXPORT PROTEIN 1-RELATED"/>
    <property type="match status" value="1"/>
</dbReference>
<dbReference type="PANTHER" id="PTHR28259:SF1">
    <property type="entry name" value="FLUORIDE EXPORT PROTEIN 1-RELATED"/>
    <property type="match status" value="1"/>
</dbReference>
<dbReference type="Pfam" id="PF02537">
    <property type="entry name" value="CRCB"/>
    <property type="match status" value="1"/>
</dbReference>
<organism>
    <name type="scientific">Rhodococcus jostii (strain RHA1)</name>
    <dbReference type="NCBI Taxonomy" id="101510"/>
    <lineage>
        <taxon>Bacteria</taxon>
        <taxon>Bacillati</taxon>
        <taxon>Actinomycetota</taxon>
        <taxon>Actinomycetes</taxon>
        <taxon>Mycobacteriales</taxon>
        <taxon>Nocardiaceae</taxon>
        <taxon>Rhodococcus</taxon>
    </lineage>
</organism>